<name>UVRB_XANCB</name>
<proteinExistence type="inferred from homology"/>
<accession>B0RRD9</accession>
<sequence length="673" mass="75841">MTDRFELVSPYSPAGDQPAAIDKLVANFEAGLAKQTLLGVTGSGKTYTIANVVQQVQKPTLVMAPNKTLAAQLYGEFKSFFPNNAVEYFVSYYDYYQPEAYVPSSDTFIEKDSSINEHIEQMRLSATKTLLSRRDSLVVATVSAIYGLGAPEDYLSLRLILSIGEHIDQRQLIRHLTDLQYTRNEFELTRGAFRVRGEVLDVFPAESDTEALRIELFDGDIEQLTLFDPLTGETLRKLQRYTVYPKTHYATTRERTLSAVDTIKEELKERLEQLYSQNKLVEAQRLAQRTQFDLEMMAEVGFCNGIENYSRHLTGKAPGEPPPTLFDYLPPDALLVIDESHVTIPQIGAMYKGDRSRKETLVEFGFRLPSALDNRPLRFEEWEARSPRSIYVSATPGPYELRESAGEITELVVRPTGLIDPVVEIRPVGTQVDDLMSEVHERIKLGDRVLVTTLTKRMAENLTEYLGEHGIRVRYLHSDIDTVERVEIIRDLRLGKFDVLVGINLLREGLDMPEVSLVAILDADKEGFLRSTGSLIQTIGRAARNLRGKAILYADKMTRSMQAAIDETDRRREKQVEYNLEHGITPKSVARPISDIMEGAREDAAEKKAGKGRSKSRQVAEEPADYRAMGPAEIAGKLKALEQKMYQHAKDLEFEAAAQIRDQIQKLKAASLA</sequence>
<reference key="1">
    <citation type="journal article" date="2008" name="J. Biotechnol.">
        <title>The genome of Xanthomonas campestris pv. campestris B100 and its use for the reconstruction of metabolic pathways involved in xanthan biosynthesis.</title>
        <authorList>
            <person name="Vorhoelter F.-J."/>
            <person name="Schneiker S."/>
            <person name="Goesmann A."/>
            <person name="Krause L."/>
            <person name="Bekel T."/>
            <person name="Kaiser O."/>
            <person name="Linke B."/>
            <person name="Patschkowski T."/>
            <person name="Rueckert C."/>
            <person name="Schmid J."/>
            <person name="Sidhu V.K."/>
            <person name="Sieber V."/>
            <person name="Tauch A."/>
            <person name="Watt S.A."/>
            <person name="Weisshaar B."/>
            <person name="Becker A."/>
            <person name="Niehaus K."/>
            <person name="Puehler A."/>
        </authorList>
    </citation>
    <scope>NUCLEOTIDE SEQUENCE [LARGE SCALE GENOMIC DNA]</scope>
    <source>
        <strain>B100</strain>
    </source>
</reference>
<keyword id="KW-0067">ATP-binding</keyword>
<keyword id="KW-0963">Cytoplasm</keyword>
<keyword id="KW-0227">DNA damage</keyword>
<keyword id="KW-0228">DNA excision</keyword>
<keyword id="KW-0234">DNA repair</keyword>
<keyword id="KW-0267">Excision nuclease</keyword>
<keyword id="KW-0347">Helicase</keyword>
<keyword id="KW-0378">Hydrolase</keyword>
<keyword id="KW-0547">Nucleotide-binding</keyword>
<keyword id="KW-0742">SOS response</keyword>
<protein>
    <recommendedName>
        <fullName evidence="1">UvrABC system protein B</fullName>
        <shortName evidence="1">Protein UvrB</shortName>
    </recommendedName>
    <alternativeName>
        <fullName evidence="1">Excinuclease ABC subunit B</fullName>
    </alternativeName>
</protein>
<evidence type="ECO:0000255" key="1">
    <source>
        <dbReference type="HAMAP-Rule" id="MF_00204"/>
    </source>
</evidence>
<evidence type="ECO:0000256" key="2">
    <source>
        <dbReference type="SAM" id="MobiDB-lite"/>
    </source>
</evidence>
<dbReference type="EMBL" id="AM920689">
    <property type="protein sequence ID" value="CAP51024.1"/>
    <property type="molecule type" value="Genomic_DNA"/>
</dbReference>
<dbReference type="SMR" id="B0RRD9"/>
<dbReference type="KEGG" id="xca:xcc-b100_1674"/>
<dbReference type="HOGENOM" id="CLU_009621_2_1_6"/>
<dbReference type="Proteomes" id="UP000001188">
    <property type="component" value="Chromosome"/>
</dbReference>
<dbReference type="GO" id="GO:0005737">
    <property type="term" value="C:cytoplasm"/>
    <property type="evidence" value="ECO:0007669"/>
    <property type="project" value="UniProtKB-SubCell"/>
</dbReference>
<dbReference type="GO" id="GO:0009380">
    <property type="term" value="C:excinuclease repair complex"/>
    <property type="evidence" value="ECO:0007669"/>
    <property type="project" value="InterPro"/>
</dbReference>
<dbReference type="GO" id="GO:0005524">
    <property type="term" value="F:ATP binding"/>
    <property type="evidence" value="ECO:0007669"/>
    <property type="project" value="UniProtKB-UniRule"/>
</dbReference>
<dbReference type="GO" id="GO:0016887">
    <property type="term" value="F:ATP hydrolysis activity"/>
    <property type="evidence" value="ECO:0007669"/>
    <property type="project" value="InterPro"/>
</dbReference>
<dbReference type="GO" id="GO:0003677">
    <property type="term" value="F:DNA binding"/>
    <property type="evidence" value="ECO:0007669"/>
    <property type="project" value="UniProtKB-UniRule"/>
</dbReference>
<dbReference type="GO" id="GO:0009381">
    <property type="term" value="F:excinuclease ABC activity"/>
    <property type="evidence" value="ECO:0007669"/>
    <property type="project" value="UniProtKB-UniRule"/>
</dbReference>
<dbReference type="GO" id="GO:0004386">
    <property type="term" value="F:helicase activity"/>
    <property type="evidence" value="ECO:0007669"/>
    <property type="project" value="UniProtKB-KW"/>
</dbReference>
<dbReference type="GO" id="GO:0006289">
    <property type="term" value="P:nucleotide-excision repair"/>
    <property type="evidence" value="ECO:0007669"/>
    <property type="project" value="UniProtKB-UniRule"/>
</dbReference>
<dbReference type="GO" id="GO:0009432">
    <property type="term" value="P:SOS response"/>
    <property type="evidence" value="ECO:0007669"/>
    <property type="project" value="UniProtKB-UniRule"/>
</dbReference>
<dbReference type="CDD" id="cd17916">
    <property type="entry name" value="DEXHc_UvrB"/>
    <property type="match status" value="1"/>
</dbReference>
<dbReference type="CDD" id="cd18790">
    <property type="entry name" value="SF2_C_UvrB"/>
    <property type="match status" value="1"/>
</dbReference>
<dbReference type="FunFam" id="3.40.50.300:FF:000477">
    <property type="entry name" value="UvrABC system protein B"/>
    <property type="match status" value="1"/>
</dbReference>
<dbReference type="Gene3D" id="6.10.140.240">
    <property type="match status" value="1"/>
</dbReference>
<dbReference type="Gene3D" id="3.40.50.300">
    <property type="entry name" value="P-loop containing nucleotide triphosphate hydrolases"/>
    <property type="match status" value="3"/>
</dbReference>
<dbReference type="Gene3D" id="4.10.860.10">
    <property type="entry name" value="UVR domain"/>
    <property type="match status" value="1"/>
</dbReference>
<dbReference type="HAMAP" id="MF_00204">
    <property type="entry name" value="UvrB"/>
    <property type="match status" value="1"/>
</dbReference>
<dbReference type="InterPro" id="IPR006935">
    <property type="entry name" value="Helicase/UvrB_N"/>
</dbReference>
<dbReference type="InterPro" id="IPR014001">
    <property type="entry name" value="Helicase_ATP-bd"/>
</dbReference>
<dbReference type="InterPro" id="IPR001650">
    <property type="entry name" value="Helicase_C-like"/>
</dbReference>
<dbReference type="InterPro" id="IPR027417">
    <property type="entry name" value="P-loop_NTPase"/>
</dbReference>
<dbReference type="InterPro" id="IPR001943">
    <property type="entry name" value="UVR_dom"/>
</dbReference>
<dbReference type="InterPro" id="IPR036876">
    <property type="entry name" value="UVR_dom_sf"/>
</dbReference>
<dbReference type="InterPro" id="IPR004807">
    <property type="entry name" value="UvrB"/>
</dbReference>
<dbReference type="InterPro" id="IPR041471">
    <property type="entry name" value="UvrB_inter"/>
</dbReference>
<dbReference type="InterPro" id="IPR024759">
    <property type="entry name" value="UvrB_YAD/RRR_dom"/>
</dbReference>
<dbReference type="NCBIfam" id="NF003673">
    <property type="entry name" value="PRK05298.1"/>
    <property type="match status" value="1"/>
</dbReference>
<dbReference type="NCBIfam" id="TIGR00631">
    <property type="entry name" value="uvrb"/>
    <property type="match status" value="1"/>
</dbReference>
<dbReference type="PANTHER" id="PTHR24029">
    <property type="entry name" value="UVRABC SYSTEM PROTEIN B"/>
    <property type="match status" value="1"/>
</dbReference>
<dbReference type="PANTHER" id="PTHR24029:SF0">
    <property type="entry name" value="UVRABC SYSTEM PROTEIN B"/>
    <property type="match status" value="1"/>
</dbReference>
<dbReference type="Pfam" id="PF00271">
    <property type="entry name" value="Helicase_C"/>
    <property type="match status" value="1"/>
</dbReference>
<dbReference type="Pfam" id="PF04851">
    <property type="entry name" value="ResIII"/>
    <property type="match status" value="1"/>
</dbReference>
<dbReference type="Pfam" id="PF02151">
    <property type="entry name" value="UVR"/>
    <property type="match status" value="1"/>
</dbReference>
<dbReference type="Pfam" id="PF12344">
    <property type="entry name" value="UvrB"/>
    <property type="match status" value="1"/>
</dbReference>
<dbReference type="Pfam" id="PF17757">
    <property type="entry name" value="UvrB_inter"/>
    <property type="match status" value="1"/>
</dbReference>
<dbReference type="SMART" id="SM00487">
    <property type="entry name" value="DEXDc"/>
    <property type="match status" value="1"/>
</dbReference>
<dbReference type="SMART" id="SM00490">
    <property type="entry name" value="HELICc"/>
    <property type="match status" value="1"/>
</dbReference>
<dbReference type="SUPFAM" id="SSF46600">
    <property type="entry name" value="C-terminal UvrC-binding domain of UvrB"/>
    <property type="match status" value="1"/>
</dbReference>
<dbReference type="SUPFAM" id="SSF52540">
    <property type="entry name" value="P-loop containing nucleoside triphosphate hydrolases"/>
    <property type="match status" value="2"/>
</dbReference>
<dbReference type="PROSITE" id="PS51192">
    <property type="entry name" value="HELICASE_ATP_BIND_1"/>
    <property type="match status" value="1"/>
</dbReference>
<dbReference type="PROSITE" id="PS51194">
    <property type="entry name" value="HELICASE_CTER"/>
    <property type="match status" value="1"/>
</dbReference>
<dbReference type="PROSITE" id="PS50151">
    <property type="entry name" value="UVR"/>
    <property type="match status" value="1"/>
</dbReference>
<organism>
    <name type="scientific">Xanthomonas campestris pv. campestris (strain B100)</name>
    <dbReference type="NCBI Taxonomy" id="509169"/>
    <lineage>
        <taxon>Bacteria</taxon>
        <taxon>Pseudomonadati</taxon>
        <taxon>Pseudomonadota</taxon>
        <taxon>Gammaproteobacteria</taxon>
        <taxon>Lysobacterales</taxon>
        <taxon>Lysobacteraceae</taxon>
        <taxon>Xanthomonas</taxon>
    </lineage>
</organism>
<gene>
    <name evidence="1" type="primary">uvrB</name>
    <name type="ordered locus">xcc-b100_1674</name>
</gene>
<comment type="function">
    <text evidence="1">The UvrABC repair system catalyzes the recognition and processing of DNA lesions. A damage recognition complex composed of 2 UvrA and 2 UvrB subunits scans DNA for abnormalities. Upon binding of the UvrA(2)B(2) complex to a putative damaged site, the DNA wraps around one UvrB monomer. DNA wrap is dependent on ATP binding by UvrB and probably causes local melting of the DNA helix, facilitating insertion of UvrB beta-hairpin between the DNA strands. Then UvrB probes one DNA strand for the presence of a lesion. If a lesion is found the UvrA subunits dissociate and the UvrB-DNA preincision complex is formed. This complex is subsequently bound by UvrC and the second UvrB is released. If no lesion is found, the DNA wraps around the other UvrB subunit that will check the other stand for damage.</text>
</comment>
<comment type="subunit">
    <text evidence="1">Forms a heterotetramer with UvrA during the search for lesions. Interacts with UvrC in an incision complex.</text>
</comment>
<comment type="subcellular location">
    <subcellularLocation>
        <location evidence="1">Cytoplasm</location>
    </subcellularLocation>
</comment>
<comment type="domain">
    <text evidence="1">The beta-hairpin motif is involved in DNA binding.</text>
</comment>
<comment type="similarity">
    <text evidence="1">Belongs to the UvrB family.</text>
</comment>
<feature type="chain" id="PRO_1000099577" description="UvrABC system protein B">
    <location>
        <begin position="1"/>
        <end position="673"/>
    </location>
</feature>
<feature type="domain" description="Helicase ATP-binding" evidence="1">
    <location>
        <begin position="26"/>
        <end position="183"/>
    </location>
</feature>
<feature type="domain" description="Helicase C-terminal" evidence="1">
    <location>
        <begin position="431"/>
        <end position="597"/>
    </location>
</feature>
<feature type="domain" description="UVR" evidence="1">
    <location>
        <begin position="635"/>
        <end position="670"/>
    </location>
</feature>
<feature type="region of interest" description="Disordered" evidence="2">
    <location>
        <begin position="601"/>
        <end position="628"/>
    </location>
</feature>
<feature type="short sequence motif" description="Beta-hairpin">
    <location>
        <begin position="92"/>
        <end position="115"/>
    </location>
</feature>
<feature type="binding site" evidence="1">
    <location>
        <begin position="39"/>
        <end position="46"/>
    </location>
    <ligand>
        <name>ATP</name>
        <dbReference type="ChEBI" id="CHEBI:30616"/>
    </ligand>
</feature>